<organism>
    <name type="scientific">Crucihimalaya wallichii</name>
    <name type="common">Rock-cress</name>
    <name type="synonym">Arabidopsis campestris</name>
    <dbReference type="NCBI Taxonomy" id="78192"/>
    <lineage>
        <taxon>Eukaryota</taxon>
        <taxon>Viridiplantae</taxon>
        <taxon>Streptophyta</taxon>
        <taxon>Embryophyta</taxon>
        <taxon>Tracheophyta</taxon>
        <taxon>Spermatophyta</taxon>
        <taxon>Magnoliopsida</taxon>
        <taxon>eudicotyledons</taxon>
        <taxon>Gunneridae</taxon>
        <taxon>Pentapetalae</taxon>
        <taxon>rosids</taxon>
        <taxon>malvids</taxon>
        <taxon>Brassicales</taxon>
        <taxon>Brassicaceae</taxon>
        <taxon>Crucihimalayeae</taxon>
        <taxon>Crucihimalaya</taxon>
    </lineage>
</organism>
<gene>
    <name type="primary">rps15</name>
</gene>
<protein>
    <recommendedName>
        <fullName evidence="2">Small ribosomal subunit protein uS15c</fullName>
    </recommendedName>
    <alternativeName>
        <fullName>30S ribosomal protein S15, chloroplastic</fullName>
    </alternativeName>
</protein>
<sequence>MIKNAFISFQEQKEESRGSVEFQVFSFTNKIRRLTSHLELHRKDYLSQRGLRKILGKRQRLLAYLSKKNRVRYKELINQLNIRELKTR</sequence>
<evidence type="ECO:0000250" key="1"/>
<evidence type="ECO:0000305" key="2"/>
<reference key="1">
    <citation type="submission" date="2007-03" db="EMBL/GenBank/DDBJ databases">
        <title>Sequencing analysis of Crucihimalaya wallichii chloroplast DNA.</title>
        <authorList>
            <person name="Hosouchi T."/>
            <person name="Tsuruoka H."/>
            <person name="Kotani H."/>
        </authorList>
    </citation>
    <scope>NUCLEOTIDE SEQUENCE [LARGE SCALE GENOMIC DNA]</scope>
</reference>
<name>RR15_CRUWA</name>
<dbReference type="EMBL" id="AP009372">
    <property type="protein sequence ID" value="BAF50346.1"/>
    <property type="molecule type" value="Genomic_DNA"/>
</dbReference>
<dbReference type="RefSeq" id="YP_001123521.1">
    <property type="nucleotide sequence ID" value="NC_009271.1"/>
</dbReference>
<dbReference type="SMR" id="A4QKZ1"/>
<dbReference type="GeneID" id="4962677"/>
<dbReference type="GO" id="GO:0009507">
    <property type="term" value="C:chloroplast"/>
    <property type="evidence" value="ECO:0007669"/>
    <property type="project" value="UniProtKB-SubCell"/>
</dbReference>
<dbReference type="GO" id="GO:1990904">
    <property type="term" value="C:ribonucleoprotein complex"/>
    <property type="evidence" value="ECO:0007669"/>
    <property type="project" value="UniProtKB-KW"/>
</dbReference>
<dbReference type="GO" id="GO:0005840">
    <property type="term" value="C:ribosome"/>
    <property type="evidence" value="ECO:0007669"/>
    <property type="project" value="UniProtKB-KW"/>
</dbReference>
<dbReference type="GO" id="GO:0003735">
    <property type="term" value="F:structural constituent of ribosome"/>
    <property type="evidence" value="ECO:0007669"/>
    <property type="project" value="InterPro"/>
</dbReference>
<dbReference type="GO" id="GO:0006412">
    <property type="term" value="P:translation"/>
    <property type="evidence" value="ECO:0007669"/>
    <property type="project" value="UniProtKB-UniRule"/>
</dbReference>
<dbReference type="CDD" id="cd00353">
    <property type="entry name" value="Ribosomal_S15p_S13e"/>
    <property type="match status" value="1"/>
</dbReference>
<dbReference type="FunFam" id="1.10.287.10:FF:000011">
    <property type="entry name" value="30S ribosomal protein S15, chloroplastic"/>
    <property type="match status" value="1"/>
</dbReference>
<dbReference type="Gene3D" id="1.10.287.10">
    <property type="entry name" value="S15/NS1, RNA-binding"/>
    <property type="match status" value="1"/>
</dbReference>
<dbReference type="HAMAP" id="MF_01343_B">
    <property type="entry name" value="Ribosomal_uS15_B"/>
    <property type="match status" value="1"/>
</dbReference>
<dbReference type="InterPro" id="IPR000589">
    <property type="entry name" value="Ribosomal_uS15"/>
</dbReference>
<dbReference type="InterPro" id="IPR005290">
    <property type="entry name" value="Ribosomal_uS15_bac-type"/>
</dbReference>
<dbReference type="InterPro" id="IPR009068">
    <property type="entry name" value="uS15_NS1_RNA-bd_sf"/>
</dbReference>
<dbReference type="NCBIfam" id="TIGR00952">
    <property type="entry name" value="S15_bact"/>
    <property type="match status" value="1"/>
</dbReference>
<dbReference type="PANTHER" id="PTHR23321">
    <property type="entry name" value="RIBOSOMAL PROTEIN S15, BACTERIAL AND ORGANELLAR"/>
    <property type="match status" value="1"/>
</dbReference>
<dbReference type="PANTHER" id="PTHR23321:SF26">
    <property type="entry name" value="SMALL RIBOSOMAL SUBUNIT PROTEIN US15M"/>
    <property type="match status" value="1"/>
</dbReference>
<dbReference type="Pfam" id="PF00312">
    <property type="entry name" value="Ribosomal_S15"/>
    <property type="match status" value="1"/>
</dbReference>
<dbReference type="SMART" id="SM01387">
    <property type="entry name" value="Ribosomal_S15"/>
    <property type="match status" value="1"/>
</dbReference>
<dbReference type="SUPFAM" id="SSF47060">
    <property type="entry name" value="S15/NS1 RNA-binding domain"/>
    <property type="match status" value="1"/>
</dbReference>
<dbReference type="PROSITE" id="PS00362">
    <property type="entry name" value="RIBOSOMAL_S15"/>
    <property type="match status" value="1"/>
</dbReference>
<comment type="subunit">
    <text evidence="1">Part of the 30S ribosomal subunit.</text>
</comment>
<comment type="subcellular location">
    <subcellularLocation>
        <location>Plastid</location>
        <location>Chloroplast</location>
    </subcellularLocation>
</comment>
<comment type="similarity">
    <text evidence="2">Belongs to the universal ribosomal protein uS15 family.</text>
</comment>
<proteinExistence type="inferred from homology"/>
<accession>A4QKZ1</accession>
<geneLocation type="chloroplast"/>
<keyword id="KW-0150">Chloroplast</keyword>
<keyword id="KW-0934">Plastid</keyword>
<keyword id="KW-0687">Ribonucleoprotein</keyword>
<keyword id="KW-0689">Ribosomal protein</keyword>
<feature type="chain" id="PRO_0000354248" description="Small ribosomal subunit protein uS15c">
    <location>
        <begin position="1"/>
        <end position="88"/>
    </location>
</feature>